<comment type="function">
    <text evidence="2 5 6">A cytochrome P450 monooxygenase involved in primary bile acid biosynthesis. Catalyzes the 12alpha-hydroxylation of 7alpha-hydroxy-4-cholesten-3-one, an intermediate metabolite in cholic acid biosynthesis (PubMed:1400444, PubMed:8943286). Controls biliary balance of cholic acid and chenodeoxycholic acid, ultimately regulating the intestinal absorption of dietary lipids (By similarity). Mechanistically, uses molecular oxygen inserting one oxygen atom into a substrate, and reducing the second into a water molecule, with two electrons provided by NADPH via cytochrome P450 reductase (CPR; NADPH--hemoprotein reductase) (PubMed:1400444, PubMed:8943286).</text>
</comment>
<comment type="catalytic activity">
    <reaction evidence="5 6">
        <text>7alpha-hydroxycholest-4-en-3-one + reduced [NADPH--hemoprotein reductase] + O2 = 7alpha,12alpha-dihydroxycholest-4-en-3-one + oxidized [NADPH--hemoprotein reductase] + H2O + H(+)</text>
        <dbReference type="Rhea" id="RHEA:46752"/>
        <dbReference type="Rhea" id="RHEA-COMP:11964"/>
        <dbReference type="Rhea" id="RHEA-COMP:11965"/>
        <dbReference type="ChEBI" id="CHEBI:15377"/>
        <dbReference type="ChEBI" id="CHEBI:15378"/>
        <dbReference type="ChEBI" id="CHEBI:15379"/>
        <dbReference type="ChEBI" id="CHEBI:17899"/>
        <dbReference type="ChEBI" id="CHEBI:28477"/>
        <dbReference type="ChEBI" id="CHEBI:57618"/>
        <dbReference type="ChEBI" id="CHEBI:58210"/>
        <dbReference type="EC" id="1.14.14.139"/>
    </reaction>
    <physiologicalReaction direction="left-to-right" evidence="9 10">
        <dbReference type="Rhea" id="RHEA:46753"/>
    </physiologicalReaction>
</comment>
<comment type="catalytic activity">
    <reaction evidence="5 6">
        <text>5beta-cholestane-3alpha,7alpha-diol + reduced [NADPH--hemoprotein reductase] + O2 = 5beta-cholestane-3alpha,7alpha,12alpha-triol + oxidized [NADPH--hemoprotein reductase] + H2O + H(+)</text>
        <dbReference type="Rhea" id="RHEA:15261"/>
        <dbReference type="Rhea" id="RHEA-COMP:11964"/>
        <dbReference type="Rhea" id="RHEA-COMP:11965"/>
        <dbReference type="ChEBI" id="CHEBI:15377"/>
        <dbReference type="ChEBI" id="CHEBI:15378"/>
        <dbReference type="ChEBI" id="CHEBI:15379"/>
        <dbReference type="ChEBI" id="CHEBI:16496"/>
        <dbReference type="ChEBI" id="CHEBI:28047"/>
        <dbReference type="ChEBI" id="CHEBI:57618"/>
        <dbReference type="ChEBI" id="CHEBI:58210"/>
        <dbReference type="EC" id="1.14.14.139"/>
    </reaction>
    <physiologicalReaction direction="left-to-right" evidence="9 10">
        <dbReference type="Rhea" id="RHEA:15262"/>
    </physiologicalReaction>
</comment>
<comment type="catalytic activity">
    <reaction evidence="5 6">
        <text>chenodeoxycholate + reduced [NADPH--hemoprotein reductase] + O2 = cholate + oxidized [NADPH--hemoprotein reductase] + H2O + H(+)</text>
        <dbReference type="Rhea" id="RHEA:65700"/>
        <dbReference type="Rhea" id="RHEA-COMP:11964"/>
        <dbReference type="Rhea" id="RHEA-COMP:11965"/>
        <dbReference type="ChEBI" id="CHEBI:15377"/>
        <dbReference type="ChEBI" id="CHEBI:15378"/>
        <dbReference type="ChEBI" id="CHEBI:15379"/>
        <dbReference type="ChEBI" id="CHEBI:29747"/>
        <dbReference type="ChEBI" id="CHEBI:36234"/>
        <dbReference type="ChEBI" id="CHEBI:57618"/>
        <dbReference type="ChEBI" id="CHEBI:58210"/>
        <dbReference type="EC" id="1.14.14.139"/>
    </reaction>
    <physiologicalReaction direction="left-to-right" evidence="9 10">
        <dbReference type="Rhea" id="RHEA:65701"/>
    </physiologicalReaction>
</comment>
<comment type="cofactor">
    <cofactor evidence="5">
        <name>heme</name>
        <dbReference type="ChEBI" id="CHEBI:30413"/>
    </cofactor>
</comment>
<comment type="activity regulation">
    <text evidence="5">Up-regulated upon treatment with streptozotocin.</text>
</comment>
<comment type="pathway">
    <text evidence="2">Lipid metabolism; bile acid biosynthesis.</text>
</comment>
<comment type="subcellular location">
    <subcellularLocation>
        <location evidence="5">Endoplasmic reticulum membrane</location>
        <topology evidence="4">Single-pass membrane protein</topology>
    </subcellularLocation>
    <subcellularLocation>
        <location evidence="5">Microsome membrane</location>
        <topology evidence="4">Single-pass membrane protein</topology>
    </subcellularLocation>
</comment>
<comment type="tissue specificity">
    <text evidence="5 6">Liver (at protein level).</text>
</comment>
<comment type="similarity">
    <text evidence="8">Belongs to the cytochrome P450 family.</text>
</comment>
<proteinExistence type="evidence at protein level"/>
<protein>
    <recommendedName>
        <fullName>7-alpha-hydroxycholest-4-en-3-one 12-alpha-hydroxylase</fullName>
        <ecNumber evidence="5 6">1.14.14.139</ecNumber>
    </recommendedName>
    <alternativeName>
        <fullName evidence="7">7-alpha-hydroxy-4-cholesten-3-one 12-alpha-hydroxylase</fullName>
    </alternativeName>
    <alternativeName>
        <fullName>CYPVIIIB1</fullName>
    </alternativeName>
    <alternativeName>
        <fullName>Cytochrome P450 8B1</fullName>
    </alternativeName>
    <alternativeName>
        <fullName>Sterol 12-alpha-hydroxylase</fullName>
    </alternativeName>
</protein>
<dbReference type="EC" id="1.14.14.139" evidence="5 6"/>
<dbReference type="EMBL" id="Y08269">
    <property type="protein sequence ID" value="CAA69594.1"/>
    <property type="molecule type" value="mRNA"/>
</dbReference>
<dbReference type="PIR" id="A45103">
    <property type="entry name" value="A45103"/>
</dbReference>
<dbReference type="RefSeq" id="NP_001076091.1">
    <property type="nucleotide sequence ID" value="NM_001082622.1"/>
</dbReference>
<dbReference type="SMR" id="O02766"/>
<dbReference type="FunCoup" id="O02766">
    <property type="interactions" value="16"/>
</dbReference>
<dbReference type="SwissLipids" id="SLP:000001318"/>
<dbReference type="PaxDb" id="9986-ENSOCUP00000023170"/>
<dbReference type="GeneID" id="100009301"/>
<dbReference type="KEGG" id="ocu:100009301"/>
<dbReference type="CTD" id="1582"/>
<dbReference type="eggNOG" id="KOG0684">
    <property type="taxonomic scope" value="Eukaryota"/>
</dbReference>
<dbReference type="InParanoid" id="O02766"/>
<dbReference type="OrthoDB" id="6692864at2759"/>
<dbReference type="BioCyc" id="MetaCyc:MONOMER-14303"/>
<dbReference type="SABIO-RK" id="O02766"/>
<dbReference type="UniPathway" id="UPA00221"/>
<dbReference type="Proteomes" id="UP000001811">
    <property type="component" value="Unplaced"/>
</dbReference>
<dbReference type="GO" id="GO:0005789">
    <property type="term" value="C:endoplasmic reticulum membrane"/>
    <property type="evidence" value="ECO:0000314"/>
    <property type="project" value="UniProtKB"/>
</dbReference>
<dbReference type="GO" id="GO:0020037">
    <property type="term" value="F:heme binding"/>
    <property type="evidence" value="ECO:0007669"/>
    <property type="project" value="InterPro"/>
</dbReference>
<dbReference type="GO" id="GO:0005506">
    <property type="term" value="F:iron ion binding"/>
    <property type="evidence" value="ECO:0007669"/>
    <property type="project" value="InterPro"/>
</dbReference>
<dbReference type="GO" id="GO:0008397">
    <property type="term" value="F:sterol 12-alpha-hydroxylase activity"/>
    <property type="evidence" value="ECO:0000314"/>
    <property type="project" value="UniProtKB"/>
</dbReference>
<dbReference type="GO" id="GO:0006699">
    <property type="term" value="P:bile acid biosynthetic process"/>
    <property type="evidence" value="ECO:0000314"/>
    <property type="project" value="UniProtKB"/>
</dbReference>
<dbReference type="GO" id="GO:0045797">
    <property type="term" value="P:positive regulation of intestinal cholesterol absorption"/>
    <property type="evidence" value="ECO:0000250"/>
    <property type="project" value="UniProtKB"/>
</dbReference>
<dbReference type="GO" id="GO:0006694">
    <property type="term" value="P:steroid biosynthetic process"/>
    <property type="evidence" value="ECO:0007669"/>
    <property type="project" value="UniProtKB-KW"/>
</dbReference>
<dbReference type="FunFam" id="1.10.630.10:FF:000025">
    <property type="entry name" value="Prostaglandin I2 (prostacyclin) synthase"/>
    <property type="match status" value="1"/>
</dbReference>
<dbReference type="Gene3D" id="1.10.630.10">
    <property type="entry name" value="Cytochrome P450"/>
    <property type="match status" value="1"/>
</dbReference>
<dbReference type="InterPro" id="IPR001128">
    <property type="entry name" value="Cyt_P450"/>
</dbReference>
<dbReference type="InterPro" id="IPR024204">
    <property type="entry name" value="Cyt_P450_CYP7A1-type"/>
</dbReference>
<dbReference type="InterPro" id="IPR002403">
    <property type="entry name" value="Cyt_P450_E_grp-IV"/>
</dbReference>
<dbReference type="InterPro" id="IPR036396">
    <property type="entry name" value="Cyt_P450_sf"/>
</dbReference>
<dbReference type="InterPro" id="IPR030686">
    <property type="entry name" value="Cytochrome_CYP8B1"/>
</dbReference>
<dbReference type="PANTHER" id="PTHR24306">
    <property type="match status" value="1"/>
</dbReference>
<dbReference type="PANTHER" id="PTHR24306:SF0">
    <property type="entry name" value="7-ALPHA-HYDROXYCHOLEST-4-EN-3-ONE 12-ALPHA-HYDROXYLASE"/>
    <property type="match status" value="1"/>
</dbReference>
<dbReference type="Pfam" id="PF00067">
    <property type="entry name" value="p450"/>
    <property type="match status" value="1"/>
</dbReference>
<dbReference type="PIRSF" id="PIRSF500627">
    <property type="entry name" value="Cytochrome_CYP8B1"/>
    <property type="match status" value="1"/>
</dbReference>
<dbReference type="PIRSF" id="PIRSF000047">
    <property type="entry name" value="Cytochrome_CYPVIIA1"/>
    <property type="match status" value="1"/>
</dbReference>
<dbReference type="PRINTS" id="PR00465">
    <property type="entry name" value="EP450IV"/>
</dbReference>
<dbReference type="SUPFAM" id="SSF48264">
    <property type="entry name" value="Cytochrome P450"/>
    <property type="match status" value="1"/>
</dbReference>
<organism>
    <name type="scientific">Oryctolagus cuniculus</name>
    <name type="common">Rabbit</name>
    <dbReference type="NCBI Taxonomy" id="9986"/>
    <lineage>
        <taxon>Eukaryota</taxon>
        <taxon>Metazoa</taxon>
        <taxon>Chordata</taxon>
        <taxon>Craniata</taxon>
        <taxon>Vertebrata</taxon>
        <taxon>Euteleostomi</taxon>
        <taxon>Mammalia</taxon>
        <taxon>Eutheria</taxon>
        <taxon>Euarchontoglires</taxon>
        <taxon>Glires</taxon>
        <taxon>Lagomorpha</taxon>
        <taxon>Leporidae</taxon>
        <taxon>Oryctolagus</taxon>
    </lineage>
</organism>
<gene>
    <name type="primary">CYP8B1</name>
    <name type="synonym">CYP12</name>
</gene>
<sequence length="500" mass="57494">MVLWGLLGALLMVMVGWLCLPGLLRQRRPQEPPLDKGSIPWLGHAMTFRKNMLEFLKHMRSKHGDVFTVQLGGQYFTFVMDPVSFGPILKDGQRKLDFVEYAKGLVLKVFGYQSIEGDHRMIHLASTKHLMGHGLEELNKAMLDSLSLVMLGPEGRSPDASRWHEDGLFHFCYGVMFKAGYLSLFGHTSDKRQDLLQAEEIFIKFRRFDLLFPRFVYSLLGPREWREVGRLQQLFHELLSVKHNPEKDGMSNWIGHMLQYLSEQGVAPAMQDKFNFMMLWASQGNTGPASFWALIYLLKHPEAMRAVKEEATRVLGEPRLEAKQSFTVQLSALQHIPVLDSVMEETLRLGAAPTLYRVVQKDILLKMASGQECLLRQGDIVTLFPYLSVHMDPDIHPEPTTFKYDRFLNPNGSRKVDFYKAGQKIHHYTMPWGSGVSICPGRFFALSEMKLFVLLMVQYFDLELVDPNTPVPPIDPRRWGFGTMQPTHDVRIRYRLKPLE</sequence>
<name>CP8B1_RABIT</name>
<accession>O02766</accession>
<feature type="initiator methionine" description="Removed" evidence="5">
    <location>
        <position position="1"/>
    </location>
</feature>
<feature type="chain" id="PRO_0000051915" description="7-alpha-hydroxycholest-4-en-3-one 12-alpha-hydroxylase">
    <location>
        <begin position="2"/>
        <end position="500"/>
    </location>
</feature>
<feature type="transmembrane region" description="Helical" evidence="4">
    <location>
        <begin position="2"/>
        <end position="21"/>
    </location>
</feature>
<feature type="binding site" description="axial binding residue" evidence="1">
    <location>
        <position position="439"/>
    </location>
    <ligand>
        <name>heme</name>
        <dbReference type="ChEBI" id="CHEBI:30413"/>
    </ligand>
    <ligandPart>
        <name>Fe</name>
        <dbReference type="ChEBI" id="CHEBI:18248"/>
    </ligandPart>
</feature>
<feature type="modified residue" description="Phosphoserine" evidence="3">
    <location>
        <position position="325"/>
    </location>
</feature>
<evidence type="ECO:0000250" key="1"/>
<evidence type="ECO:0000250" key="2">
    <source>
        <dbReference type="UniProtKB" id="O88962"/>
    </source>
</evidence>
<evidence type="ECO:0000250" key="3">
    <source>
        <dbReference type="UniProtKB" id="Q9UNU6"/>
    </source>
</evidence>
<evidence type="ECO:0000255" key="4"/>
<evidence type="ECO:0000269" key="5">
    <source>
    </source>
</evidence>
<evidence type="ECO:0000269" key="6">
    <source>
    </source>
</evidence>
<evidence type="ECO:0000303" key="7">
    <source>
    </source>
</evidence>
<evidence type="ECO:0000305" key="8"/>
<evidence type="ECO:0000305" key="9">
    <source>
    </source>
</evidence>
<evidence type="ECO:0000305" key="10">
    <source>
    </source>
</evidence>
<reference key="1">
    <citation type="journal article" date="1996" name="J. Biol. Chem.">
        <title>Molecular cloning and expression of rabbit sterol 12alpha-hydroxylase.</title>
        <authorList>
            <person name="Eggertsen G."/>
            <person name="Olin M."/>
            <person name="Andersson U."/>
            <person name="Ishida H."/>
            <person name="Kubota S."/>
            <person name="Hellman U."/>
            <person name="Okuda K."/>
            <person name="Bjoerkhem I."/>
        </authorList>
    </citation>
    <scope>NUCLEOTIDE SEQUENCE [MRNA]</scope>
    <scope>PROTEIN SEQUENCE OF 109-120; 129-140; 215-223; 231-242; 324-343; 367-376; 478-491 AND 496-500</scope>
    <scope>FUNCTION</scope>
    <scope>CATALYTIC ACTIVITY</scope>
    <scope>TISSUE SPECIFICITY</scope>
    <source>
        <strain>New Zealand white</strain>
        <tissue>Liver</tissue>
    </source>
</reference>
<reference key="2">
    <citation type="journal article" date="1992" name="J. Biol. Chem.">
        <title>Purification and characterization of 7 alpha-hydroxy-4-cholesten-3-one 12 alpha-hydroxylase.</title>
        <authorList>
            <person name="Ishida H."/>
            <person name="Noshiro M."/>
            <person name="Okuda K."/>
            <person name="Coon M.J."/>
        </authorList>
    </citation>
    <scope>PROTEIN SEQUENCE OF 2-16</scope>
    <scope>FUNCTION</scope>
    <scope>CATALYTIC ACTIVITY</scope>
    <scope>COFACTOR</scope>
    <scope>ACTIVITY REGULATION</scope>
    <scope>TISSUE SPECIFICITY</scope>
    <scope>SUBCELLULAR LOCATION</scope>
    <source>
        <tissue>Liver</tissue>
    </source>
</reference>
<keyword id="KW-0903">Direct protein sequencing</keyword>
<keyword id="KW-0256">Endoplasmic reticulum</keyword>
<keyword id="KW-0349">Heme</keyword>
<keyword id="KW-0408">Iron</keyword>
<keyword id="KW-0444">Lipid biosynthesis</keyword>
<keyword id="KW-0443">Lipid metabolism</keyword>
<keyword id="KW-0472">Membrane</keyword>
<keyword id="KW-0479">Metal-binding</keyword>
<keyword id="KW-0492">Microsome</keyword>
<keyword id="KW-0503">Monooxygenase</keyword>
<keyword id="KW-0560">Oxidoreductase</keyword>
<keyword id="KW-0597">Phosphoprotein</keyword>
<keyword id="KW-1185">Reference proteome</keyword>
<keyword id="KW-0752">Steroid biosynthesis</keyword>
<keyword id="KW-0346">Stress response</keyword>
<keyword id="KW-0812">Transmembrane</keyword>
<keyword id="KW-1133">Transmembrane helix</keyword>